<evidence type="ECO:0000250" key="1"/>
<evidence type="ECO:0000256" key="2">
    <source>
        <dbReference type="SAM" id="MobiDB-lite"/>
    </source>
</evidence>
<evidence type="ECO:0000269" key="3">
    <source>
    </source>
</evidence>
<evidence type="ECO:0000269" key="4">
    <source>
    </source>
</evidence>
<evidence type="ECO:0000305" key="5"/>
<evidence type="ECO:0000312" key="6">
    <source>
        <dbReference type="EMBL" id="AAF28106.1"/>
    </source>
</evidence>
<evidence type="ECO:0007829" key="7">
    <source>
        <dbReference type="PDB" id="4ZP3"/>
    </source>
</evidence>
<evidence type="ECO:0007829" key="8">
    <source>
        <dbReference type="PDB" id="5JJ2"/>
    </source>
</evidence>
<accession>Q9P0M2</accession>
<accession>B4DUC3</accession>
<accession>Q9HCZ8</accession>
<proteinExistence type="evidence at protein level"/>
<name>AKA7G_HUMAN</name>
<comment type="function">
    <text evidence="3 4">Probably targets cAMP-dependent protein kinase (PKA) to the cellular membrane or cytoskeletal structures. The membrane-associated form reduces epithelial sodium channel (ENaC) activity, whereas the free cytoplasmic form may negatively regulate ENaC channel feedback inhibition by intracellular sodium.</text>
</comment>
<comment type="subunit">
    <text evidence="4">Binds cAMP-dependent protein kinase (PKA). Interacts with PRKCA; only the cytoplasmic form is capable of interacting with PRKCA.</text>
</comment>
<comment type="subcellular location">
    <subcellularLocation>
        <location evidence="1">Nucleus</location>
    </subcellularLocation>
    <subcellularLocation>
        <location evidence="3">Cytoplasm</location>
    </subcellularLocation>
</comment>
<comment type="alternative products">
    <event type="alternative splicing"/>
    <isoform>
        <id>Q9P0M2-1</id>
        <name>Gamma</name>
        <sequence type="displayed"/>
    </isoform>
    <isoform>
        <id>O43687-2</id>
        <name>Alpha</name>
        <sequence type="external"/>
    </isoform>
    <isoform>
        <id>O43687-1</id>
        <name>Beta</name>
        <sequence type="external"/>
    </isoform>
    <text>Additional isoforms seem to exist.</text>
</comment>
<comment type="tissue specificity">
    <text evidence="3">Expressed in brain, heart, lung, pancreas and placenta.</text>
</comment>
<comment type="sequence caution" evidence="5">
    <conflict type="erroneous initiation">
        <sequence resource="EMBL-CDS" id="AAF28106"/>
    </conflict>
    <text>Truncated N-terminus.</text>
</comment>
<reference key="1">
    <citation type="journal article" date="2004" name="Nat. Genet.">
        <title>Complete sequencing and characterization of 21,243 full-length human cDNAs.</title>
        <authorList>
            <person name="Ota T."/>
            <person name="Suzuki Y."/>
            <person name="Nishikawa T."/>
            <person name="Otsuki T."/>
            <person name="Sugiyama T."/>
            <person name="Irie R."/>
            <person name="Wakamatsu A."/>
            <person name="Hayashi K."/>
            <person name="Sato H."/>
            <person name="Nagai K."/>
            <person name="Kimura K."/>
            <person name="Makita H."/>
            <person name="Sekine M."/>
            <person name="Obayashi M."/>
            <person name="Nishi T."/>
            <person name="Shibahara T."/>
            <person name="Tanaka T."/>
            <person name="Ishii S."/>
            <person name="Yamamoto J."/>
            <person name="Saito K."/>
            <person name="Kawai Y."/>
            <person name="Isono Y."/>
            <person name="Nakamura Y."/>
            <person name="Nagahari K."/>
            <person name="Murakami K."/>
            <person name="Yasuda T."/>
            <person name="Iwayanagi T."/>
            <person name="Wagatsuma M."/>
            <person name="Shiratori A."/>
            <person name="Sudo H."/>
            <person name="Hosoiri T."/>
            <person name="Kaku Y."/>
            <person name="Kodaira H."/>
            <person name="Kondo H."/>
            <person name="Sugawara M."/>
            <person name="Takahashi M."/>
            <person name="Kanda K."/>
            <person name="Yokoi T."/>
            <person name="Furuya T."/>
            <person name="Kikkawa E."/>
            <person name="Omura Y."/>
            <person name="Abe K."/>
            <person name="Kamihara K."/>
            <person name="Katsuta N."/>
            <person name="Sato K."/>
            <person name="Tanikawa M."/>
            <person name="Yamazaki M."/>
            <person name="Ninomiya K."/>
            <person name="Ishibashi T."/>
            <person name="Yamashita H."/>
            <person name="Murakawa K."/>
            <person name="Fujimori K."/>
            <person name="Tanai H."/>
            <person name="Kimata M."/>
            <person name="Watanabe M."/>
            <person name="Hiraoka S."/>
            <person name="Chiba Y."/>
            <person name="Ishida S."/>
            <person name="Ono Y."/>
            <person name="Takiguchi S."/>
            <person name="Watanabe S."/>
            <person name="Yosida M."/>
            <person name="Hotuta T."/>
            <person name="Kusano J."/>
            <person name="Kanehori K."/>
            <person name="Takahashi-Fujii A."/>
            <person name="Hara H."/>
            <person name="Tanase T.-O."/>
            <person name="Nomura Y."/>
            <person name="Togiya S."/>
            <person name="Komai F."/>
            <person name="Hara R."/>
            <person name="Takeuchi K."/>
            <person name="Arita M."/>
            <person name="Imose N."/>
            <person name="Musashino K."/>
            <person name="Yuuki H."/>
            <person name="Oshima A."/>
            <person name="Sasaki N."/>
            <person name="Aotsuka S."/>
            <person name="Yoshikawa Y."/>
            <person name="Matsunawa H."/>
            <person name="Ichihara T."/>
            <person name="Shiohata N."/>
            <person name="Sano S."/>
            <person name="Moriya S."/>
            <person name="Momiyama H."/>
            <person name="Satoh N."/>
            <person name="Takami S."/>
            <person name="Terashima Y."/>
            <person name="Suzuki O."/>
            <person name="Nakagawa S."/>
            <person name="Senoh A."/>
            <person name="Mizoguchi H."/>
            <person name="Goto Y."/>
            <person name="Shimizu F."/>
            <person name="Wakebe H."/>
            <person name="Hishigaki H."/>
            <person name="Watanabe T."/>
            <person name="Sugiyama A."/>
            <person name="Takemoto M."/>
            <person name="Kawakami B."/>
            <person name="Yamazaki M."/>
            <person name="Watanabe K."/>
            <person name="Kumagai A."/>
            <person name="Itakura S."/>
            <person name="Fukuzumi Y."/>
            <person name="Fujimori Y."/>
            <person name="Komiyama M."/>
            <person name="Tashiro H."/>
            <person name="Tanigami A."/>
            <person name="Fujiwara T."/>
            <person name="Ono T."/>
            <person name="Yamada K."/>
            <person name="Fujii Y."/>
            <person name="Ozaki K."/>
            <person name="Hirao M."/>
            <person name="Ohmori Y."/>
            <person name="Kawabata A."/>
            <person name="Hikiji T."/>
            <person name="Kobatake N."/>
            <person name="Inagaki H."/>
            <person name="Ikema Y."/>
            <person name="Okamoto S."/>
            <person name="Okitani R."/>
            <person name="Kawakami T."/>
            <person name="Noguchi S."/>
            <person name="Itoh T."/>
            <person name="Shigeta K."/>
            <person name="Senba T."/>
            <person name="Matsumura K."/>
            <person name="Nakajima Y."/>
            <person name="Mizuno T."/>
            <person name="Morinaga M."/>
            <person name="Sasaki M."/>
            <person name="Togashi T."/>
            <person name="Oyama M."/>
            <person name="Hata H."/>
            <person name="Watanabe M."/>
            <person name="Komatsu T."/>
            <person name="Mizushima-Sugano J."/>
            <person name="Satoh T."/>
            <person name="Shirai Y."/>
            <person name="Takahashi Y."/>
            <person name="Nakagawa K."/>
            <person name="Okumura K."/>
            <person name="Nagase T."/>
            <person name="Nomura N."/>
            <person name="Kikuchi H."/>
            <person name="Masuho Y."/>
            <person name="Yamashita R."/>
            <person name="Nakai K."/>
            <person name="Yada T."/>
            <person name="Nakamura Y."/>
            <person name="Ohara O."/>
            <person name="Isogai T."/>
            <person name="Sugano S."/>
        </authorList>
    </citation>
    <scope>NUCLEOTIDE SEQUENCE [LARGE SCALE MRNA]</scope>
</reference>
<reference key="2">
    <citation type="journal article" date="2003" name="Nature">
        <title>The DNA sequence and analysis of human chromosome 6.</title>
        <authorList>
            <person name="Mungall A.J."/>
            <person name="Palmer S.A."/>
            <person name="Sims S.K."/>
            <person name="Edwards C.A."/>
            <person name="Ashurst J.L."/>
            <person name="Wilming L."/>
            <person name="Jones M.C."/>
            <person name="Horton R."/>
            <person name="Hunt S.E."/>
            <person name="Scott C.E."/>
            <person name="Gilbert J.G.R."/>
            <person name="Clamp M.E."/>
            <person name="Bethel G."/>
            <person name="Milne S."/>
            <person name="Ainscough R."/>
            <person name="Almeida J.P."/>
            <person name="Ambrose K.D."/>
            <person name="Andrews T.D."/>
            <person name="Ashwell R.I.S."/>
            <person name="Babbage A.K."/>
            <person name="Bagguley C.L."/>
            <person name="Bailey J."/>
            <person name="Banerjee R."/>
            <person name="Barker D.J."/>
            <person name="Barlow K.F."/>
            <person name="Bates K."/>
            <person name="Beare D.M."/>
            <person name="Beasley H."/>
            <person name="Beasley O."/>
            <person name="Bird C.P."/>
            <person name="Blakey S.E."/>
            <person name="Bray-Allen S."/>
            <person name="Brook J."/>
            <person name="Brown A.J."/>
            <person name="Brown J.Y."/>
            <person name="Burford D.C."/>
            <person name="Burrill W."/>
            <person name="Burton J."/>
            <person name="Carder C."/>
            <person name="Carter N.P."/>
            <person name="Chapman J.C."/>
            <person name="Clark S.Y."/>
            <person name="Clark G."/>
            <person name="Clee C.M."/>
            <person name="Clegg S."/>
            <person name="Cobley V."/>
            <person name="Collier R.E."/>
            <person name="Collins J.E."/>
            <person name="Colman L.K."/>
            <person name="Corby N.R."/>
            <person name="Coville G.J."/>
            <person name="Culley K.M."/>
            <person name="Dhami P."/>
            <person name="Davies J."/>
            <person name="Dunn M."/>
            <person name="Earthrowl M.E."/>
            <person name="Ellington A.E."/>
            <person name="Evans K.A."/>
            <person name="Faulkner L."/>
            <person name="Francis M.D."/>
            <person name="Frankish A."/>
            <person name="Frankland J."/>
            <person name="French L."/>
            <person name="Garner P."/>
            <person name="Garnett J."/>
            <person name="Ghori M.J."/>
            <person name="Gilby L.M."/>
            <person name="Gillson C.J."/>
            <person name="Glithero R.J."/>
            <person name="Grafham D.V."/>
            <person name="Grant M."/>
            <person name="Gribble S."/>
            <person name="Griffiths C."/>
            <person name="Griffiths M.N.D."/>
            <person name="Hall R."/>
            <person name="Halls K.S."/>
            <person name="Hammond S."/>
            <person name="Harley J.L."/>
            <person name="Hart E.A."/>
            <person name="Heath P.D."/>
            <person name="Heathcott R."/>
            <person name="Holmes S.J."/>
            <person name="Howden P.J."/>
            <person name="Howe K.L."/>
            <person name="Howell G.R."/>
            <person name="Huckle E."/>
            <person name="Humphray S.J."/>
            <person name="Humphries M.D."/>
            <person name="Hunt A.R."/>
            <person name="Johnson C.M."/>
            <person name="Joy A.A."/>
            <person name="Kay M."/>
            <person name="Keenan S.J."/>
            <person name="Kimberley A.M."/>
            <person name="King A."/>
            <person name="Laird G.K."/>
            <person name="Langford C."/>
            <person name="Lawlor S."/>
            <person name="Leongamornlert D.A."/>
            <person name="Leversha M."/>
            <person name="Lloyd C.R."/>
            <person name="Lloyd D.M."/>
            <person name="Loveland J.E."/>
            <person name="Lovell J."/>
            <person name="Martin S."/>
            <person name="Mashreghi-Mohammadi M."/>
            <person name="Maslen G.L."/>
            <person name="Matthews L."/>
            <person name="McCann O.T."/>
            <person name="McLaren S.J."/>
            <person name="McLay K."/>
            <person name="McMurray A."/>
            <person name="Moore M.J.F."/>
            <person name="Mullikin J.C."/>
            <person name="Niblett D."/>
            <person name="Nickerson T."/>
            <person name="Novik K.L."/>
            <person name="Oliver K."/>
            <person name="Overton-Larty E.K."/>
            <person name="Parker A."/>
            <person name="Patel R."/>
            <person name="Pearce A.V."/>
            <person name="Peck A.I."/>
            <person name="Phillimore B.J.C.T."/>
            <person name="Phillips S."/>
            <person name="Plumb R.W."/>
            <person name="Porter K.M."/>
            <person name="Ramsey Y."/>
            <person name="Ranby S.A."/>
            <person name="Rice C.M."/>
            <person name="Ross M.T."/>
            <person name="Searle S.M."/>
            <person name="Sehra H.K."/>
            <person name="Sheridan E."/>
            <person name="Skuce C.D."/>
            <person name="Smith S."/>
            <person name="Smith M."/>
            <person name="Spraggon L."/>
            <person name="Squares S.L."/>
            <person name="Steward C.A."/>
            <person name="Sycamore N."/>
            <person name="Tamlyn-Hall G."/>
            <person name="Tester J."/>
            <person name="Theaker A.J."/>
            <person name="Thomas D.W."/>
            <person name="Thorpe A."/>
            <person name="Tracey A."/>
            <person name="Tromans A."/>
            <person name="Tubby B."/>
            <person name="Wall M."/>
            <person name="Wallis J.M."/>
            <person name="West A.P."/>
            <person name="White S.S."/>
            <person name="Whitehead S.L."/>
            <person name="Whittaker H."/>
            <person name="Wild A."/>
            <person name="Willey D.J."/>
            <person name="Wilmer T.E."/>
            <person name="Wood J.M."/>
            <person name="Wray P.W."/>
            <person name="Wyatt J.C."/>
            <person name="Young L."/>
            <person name="Younger R.M."/>
            <person name="Bentley D.R."/>
            <person name="Coulson A."/>
            <person name="Durbin R.M."/>
            <person name="Hubbard T."/>
            <person name="Sulston J.E."/>
            <person name="Dunham I."/>
            <person name="Rogers J."/>
            <person name="Beck S."/>
        </authorList>
    </citation>
    <scope>NUCLEOTIDE SEQUENCE [LARGE SCALE GENOMIC DNA]</scope>
</reference>
<reference evidence="5" key="3">
    <citation type="journal article" date="1999" name="J. Cell Biol.">
        <title>Alternative splicing regulates the subcellular localization of A-kinase anchoring protein 18 isoforms.</title>
        <authorList>
            <person name="Trotter K.W."/>
            <person name="Fraser I.D.C."/>
            <person name="Scott G.K."/>
            <person name="Stutts M.J."/>
            <person name="Scott J.D."/>
            <person name="Milgram S.L."/>
        </authorList>
    </citation>
    <scope>NUCLEOTIDE SEQUENCE [MRNA] OF 20-348</scope>
    <scope>FUNCTION</scope>
    <scope>RII-BINDING</scope>
    <scope>SUBCELLULAR LOCATION</scope>
    <scope>TISSUE SPECIFICITY</scope>
    <source>
        <tissue>Lung</tissue>
    </source>
</reference>
<reference key="4">
    <citation type="journal article" date="2007" name="FASEB J.">
        <title>The A-kinase anchoring protein 15 regulates feedback inhibition of the epithelial Na+ channel.</title>
        <authorList>
            <person name="Bengrine A."/>
            <person name="Li J."/>
            <person name="Awayda M.S."/>
        </authorList>
    </citation>
    <scope>FUNCTION</scope>
    <scope>INTERACTION WITH PRKCA</scope>
</reference>
<gene>
    <name type="primary">AKAP7</name>
    <name type="synonym">AKAP18</name>
</gene>
<organism evidence="6">
    <name type="scientific">Homo sapiens</name>
    <name type="common">Human</name>
    <dbReference type="NCBI Taxonomy" id="9606"/>
    <lineage>
        <taxon>Eukaryota</taxon>
        <taxon>Metazoa</taxon>
        <taxon>Chordata</taxon>
        <taxon>Craniata</taxon>
        <taxon>Vertebrata</taxon>
        <taxon>Euteleostomi</taxon>
        <taxon>Mammalia</taxon>
        <taxon>Eutheria</taxon>
        <taxon>Euarchontoglires</taxon>
        <taxon>Primates</taxon>
        <taxon>Haplorrhini</taxon>
        <taxon>Catarrhini</taxon>
        <taxon>Hominidae</taxon>
        <taxon>Homo</taxon>
    </lineage>
</organism>
<keyword id="KW-0002">3D-structure</keyword>
<keyword id="KW-0025">Alternative splicing</keyword>
<keyword id="KW-0963">Cytoplasm</keyword>
<keyword id="KW-0547">Nucleotide-binding</keyword>
<keyword id="KW-0539">Nucleus</keyword>
<keyword id="KW-1267">Proteomics identification</keyword>
<keyword id="KW-1185">Reference proteome</keyword>
<dbReference type="EMBL" id="AK300587">
    <property type="protein sequence ID" value="BAG62285.1"/>
    <property type="molecule type" value="mRNA"/>
</dbReference>
<dbReference type="EMBL" id="AL136110">
    <property type="status" value="NOT_ANNOTATED_CDS"/>
    <property type="molecule type" value="Genomic_DNA"/>
</dbReference>
<dbReference type="EMBL" id="AL137063">
    <property type="status" value="NOT_ANNOTATED_CDS"/>
    <property type="molecule type" value="Genomic_DNA"/>
</dbReference>
<dbReference type="EMBL" id="AL137222">
    <property type="status" value="NOT_ANNOTATED_CDS"/>
    <property type="molecule type" value="Genomic_DNA"/>
</dbReference>
<dbReference type="EMBL" id="AF152929">
    <property type="protein sequence ID" value="AAF28106.1"/>
    <property type="status" value="ALT_INIT"/>
    <property type="molecule type" value="mRNA"/>
</dbReference>
<dbReference type="CCDS" id="CCDS5142.2">
    <molecule id="Q9P0M2-1"/>
</dbReference>
<dbReference type="RefSeq" id="NP_057461.2">
    <molecule id="Q9P0M2-1"/>
    <property type="nucleotide sequence ID" value="NM_016377.4"/>
</dbReference>
<dbReference type="PDB" id="4ZP3">
    <property type="method" value="X-ray"/>
    <property type="resolution" value="2.63 A"/>
    <property type="chains" value="M/N/O/P/Q/R=287-326"/>
</dbReference>
<dbReference type="PDB" id="5JJ2">
    <property type="method" value="X-ray"/>
    <property type="resolution" value="1.25 A"/>
    <property type="chains" value="A=76-286"/>
</dbReference>
<dbReference type="PDBsum" id="4ZP3"/>
<dbReference type="PDBsum" id="5JJ2"/>
<dbReference type="SMR" id="Q9P0M2"/>
<dbReference type="BioGRID" id="114851">
    <property type="interactions" value="48"/>
</dbReference>
<dbReference type="FunCoup" id="Q9P0M2">
    <property type="interactions" value="287"/>
</dbReference>
<dbReference type="IntAct" id="Q9P0M2">
    <property type="interactions" value="28"/>
</dbReference>
<dbReference type="STRING" id="9606.ENSP00000405252"/>
<dbReference type="BindingDB" id="Q9P0M2"/>
<dbReference type="GlyGen" id="Q9P0M2">
    <property type="glycosylation" value="2 sites, 1 O-linked glycan (2 sites)"/>
</dbReference>
<dbReference type="iPTMnet" id="Q9P0M2"/>
<dbReference type="PhosphoSitePlus" id="Q9P0M2"/>
<dbReference type="BioMuta" id="AKAP7"/>
<dbReference type="DMDM" id="357528766"/>
<dbReference type="jPOST" id="Q9P0M2"/>
<dbReference type="MassIVE" id="Q9P0M2"/>
<dbReference type="PaxDb" id="9606-ENSP00000405252"/>
<dbReference type="ProteomicsDB" id="83578">
    <molecule id="Q9P0M2-1"/>
</dbReference>
<dbReference type="Pumba" id="Q9P0M2"/>
<dbReference type="Antibodypedia" id="19674">
    <property type="antibodies" value="297 antibodies from 28 providers"/>
</dbReference>
<dbReference type="DNASU" id="9465"/>
<dbReference type="Ensembl" id="ENST00000431975.7">
    <molecule id="Q9P0M2-1"/>
    <property type="protein sequence ID" value="ENSP00000405252.2"/>
    <property type="gene ID" value="ENSG00000118507.19"/>
</dbReference>
<dbReference type="GeneID" id="9465"/>
<dbReference type="KEGG" id="hsa:9465"/>
<dbReference type="MANE-Select" id="ENST00000431975.7">
    <property type="protein sequence ID" value="ENSP00000405252.2"/>
    <property type="RefSeq nucleotide sequence ID" value="NM_016377.4"/>
    <property type="RefSeq protein sequence ID" value="NP_057461.2"/>
</dbReference>
<dbReference type="UCSC" id="uc003qck.5">
    <molecule id="Q9P0M2-1"/>
    <property type="organism name" value="human"/>
</dbReference>
<dbReference type="AGR" id="HGNC:377"/>
<dbReference type="CTD" id="9465"/>
<dbReference type="DisGeNET" id="9465"/>
<dbReference type="GeneCards" id="AKAP7"/>
<dbReference type="HGNC" id="HGNC:377">
    <property type="gene designation" value="AKAP7"/>
</dbReference>
<dbReference type="HPA" id="ENSG00000118507">
    <property type="expression patterns" value="Tissue enhanced (adrenal)"/>
</dbReference>
<dbReference type="MIM" id="604693">
    <property type="type" value="gene"/>
</dbReference>
<dbReference type="neXtProt" id="NX_Q9P0M2"/>
<dbReference type="OpenTargets" id="ENSG00000118507"/>
<dbReference type="PharmGKB" id="PA24671"/>
<dbReference type="VEuPathDB" id="HostDB:ENSG00000118507"/>
<dbReference type="eggNOG" id="KOG2814">
    <property type="taxonomic scope" value="Eukaryota"/>
</dbReference>
<dbReference type="GeneTree" id="ENSGT00390000012756"/>
<dbReference type="HOGENOM" id="CLU_052186_0_0_1"/>
<dbReference type="InParanoid" id="Q9P0M2"/>
<dbReference type="OMA" id="HCESSII"/>
<dbReference type="OrthoDB" id="277832at2759"/>
<dbReference type="PAN-GO" id="Q9P0M2">
    <property type="GO annotations" value="3 GO annotations based on evolutionary models"/>
</dbReference>
<dbReference type="TreeFam" id="TF105406"/>
<dbReference type="PathwayCommons" id="Q9P0M2"/>
<dbReference type="SignaLink" id="Q9P0M2"/>
<dbReference type="BioGRID-ORCS" id="9465">
    <property type="hits" value="11 hits in 1161 CRISPR screens"/>
</dbReference>
<dbReference type="ChiTaRS" id="AKAP7">
    <property type="organism name" value="human"/>
</dbReference>
<dbReference type="GenomeRNAi" id="9465"/>
<dbReference type="Pharos" id="Q9P0M2">
    <property type="development level" value="Tbio"/>
</dbReference>
<dbReference type="Proteomes" id="UP000005640">
    <property type="component" value="Chromosome 6"/>
</dbReference>
<dbReference type="RNAct" id="Q9P0M2">
    <property type="molecule type" value="protein"/>
</dbReference>
<dbReference type="Bgee" id="ENSG00000118507">
    <property type="expression patterns" value="Expressed in adrenal tissue and 209 other cell types or tissues"/>
</dbReference>
<dbReference type="ExpressionAtlas" id="Q9P0M2">
    <property type="expression patterns" value="baseline and differential"/>
</dbReference>
<dbReference type="GO" id="GO:0005829">
    <property type="term" value="C:cytosol"/>
    <property type="evidence" value="ECO:0000314"/>
    <property type="project" value="UniProtKB"/>
</dbReference>
<dbReference type="GO" id="GO:0098686">
    <property type="term" value="C:hippocampal mossy fiber to CA3 synapse"/>
    <property type="evidence" value="ECO:0007669"/>
    <property type="project" value="Ensembl"/>
</dbReference>
<dbReference type="GO" id="GO:0005634">
    <property type="term" value="C:nucleus"/>
    <property type="evidence" value="ECO:0007669"/>
    <property type="project" value="UniProtKB-SubCell"/>
</dbReference>
<dbReference type="GO" id="GO:0032991">
    <property type="term" value="C:protein-containing complex"/>
    <property type="evidence" value="ECO:0000314"/>
    <property type="project" value="UniProtKB"/>
</dbReference>
<dbReference type="GO" id="GO:0000166">
    <property type="term" value="F:nucleotide binding"/>
    <property type="evidence" value="ECO:0007669"/>
    <property type="project" value="UniProtKB-KW"/>
</dbReference>
<dbReference type="GO" id="GO:0051018">
    <property type="term" value="F:protein kinase A binding"/>
    <property type="evidence" value="ECO:0000314"/>
    <property type="project" value="UniProtKB"/>
</dbReference>
<dbReference type="GO" id="GO:0034237">
    <property type="term" value="F:protein kinase A regulatory subunit binding"/>
    <property type="evidence" value="ECO:0000318"/>
    <property type="project" value="GO_Central"/>
</dbReference>
<dbReference type="GO" id="GO:0019901">
    <property type="term" value="F:protein kinase binding"/>
    <property type="evidence" value="ECO:0007669"/>
    <property type="project" value="Ensembl"/>
</dbReference>
<dbReference type="GO" id="GO:0050804">
    <property type="term" value="P:modulation of chemical synaptic transmission"/>
    <property type="evidence" value="ECO:0007669"/>
    <property type="project" value="Ensembl"/>
</dbReference>
<dbReference type="FunFam" id="3.90.1140.10:FF:000004">
    <property type="entry name" value="A-kinase anchoring protein 7 isoform X1"/>
    <property type="match status" value="1"/>
</dbReference>
<dbReference type="Gene3D" id="3.90.1140.10">
    <property type="entry name" value="Cyclic phosphodiesterase"/>
    <property type="match status" value="1"/>
</dbReference>
<dbReference type="InterPro" id="IPR019510">
    <property type="entry name" value="AKAP7-like_phosphoesterase"/>
</dbReference>
<dbReference type="InterPro" id="IPR052641">
    <property type="entry name" value="AKAP7_isoform_gamma"/>
</dbReference>
<dbReference type="InterPro" id="IPR019511">
    <property type="entry name" value="AKAP7_RI-RII-bd_dom"/>
</dbReference>
<dbReference type="InterPro" id="IPR009097">
    <property type="entry name" value="Cyclic_Pdiesterase"/>
</dbReference>
<dbReference type="PANTHER" id="PTHR15934:SF6">
    <property type="entry name" value="A-KINASE ANCHOR PROTEIN 7 ISOFORM GAMMA"/>
    <property type="match status" value="1"/>
</dbReference>
<dbReference type="PANTHER" id="PTHR15934">
    <property type="entry name" value="RNA 2',3'-CYCLIC PHOSPHODIESTERASE"/>
    <property type="match status" value="1"/>
</dbReference>
<dbReference type="Pfam" id="PF10469">
    <property type="entry name" value="AKAP7_NLS"/>
    <property type="match status" value="1"/>
</dbReference>
<dbReference type="Pfam" id="PF10470">
    <property type="entry name" value="AKAP7_RIRII_bdg"/>
    <property type="match status" value="1"/>
</dbReference>
<dbReference type="SUPFAM" id="SSF55144">
    <property type="entry name" value="LigT-like"/>
    <property type="match status" value="1"/>
</dbReference>
<sequence length="348" mass="39518">MERPEAGGINSNECENVSRKKKMSEEFEANTMDSLVDMPFATVDIQDDCGITDEPQINLKRSQENEWVKSDQVKKRKKKRKDYQPNYFLSIPITNKEIIKGIKILQNAIIQQDERLAKAMVSDGSFHITLLVMQLLNEDEVNIGIDALLELKPFIEELLQGKHLTLPFQGIGTFGNQVGFVKLAEGDHVNSLLEIAETANRTFQEKGILVGESRSFKPHLTFMKLSKSPWLRKNGVKKIDPDLYEKFISHRFGEEILYRIDLCSMLKKKQSNGYYHCESSIVIGEKNGGEPDDAELVRLSKRLVENAVLKAVQQYLEETQNKNKPGEGSSVKTEAADQNGNDNENNRK</sequence>
<feature type="chain" id="PRO_0000064523" description="A-kinase anchor protein 7 isoform gamma">
    <location>
        <begin position="1"/>
        <end position="348"/>
    </location>
</feature>
<feature type="region of interest" description="Disordered" evidence="2">
    <location>
        <begin position="1"/>
        <end position="25"/>
    </location>
</feature>
<feature type="region of interest" description="PKA-RII-alpha subunit binding domain" evidence="1">
    <location>
        <begin position="294"/>
        <end position="348"/>
    </location>
</feature>
<feature type="region of interest" description="RI-alpha-binding" evidence="1">
    <location>
        <begin position="295"/>
        <end position="319"/>
    </location>
</feature>
<feature type="region of interest" description="RII-binding">
    <location>
        <begin position="296"/>
        <end position="309"/>
    </location>
</feature>
<feature type="region of interest" description="Disordered" evidence="2">
    <location>
        <begin position="316"/>
        <end position="348"/>
    </location>
</feature>
<feature type="compositionally biased region" description="Polar residues" evidence="2">
    <location>
        <begin position="330"/>
        <end position="348"/>
    </location>
</feature>
<feature type="binding site" evidence="1">
    <location>
        <position position="129"/>
    </location>
    <ligand>
        <name>AMP</name>
        <dbReference type="ChEBI" id="CHEBI:456215"/>
    </ligand>
</feature>
<feature type="binding site" evidence="1">
    <location>
        <position position="129"/>
    </location>
    <ligand>
        <name>CMP</name>
        <dbReference type="ChEBI" id="CHEBI:60377"/>
    </ligand>
</feature>
<feature type="binding site" evidence="1">
    <location>
        <begin position="219"/>
        <end position="221"/>
    </location>
    <ligand>
        <name>AMP</name>
        <dbReference type="ChEBI" id="CHEBI:456215"/>
    </ligand>
</feature>
<feature type="binding site" evidence="1">
    <location>
        <begin position="219"/>
        <end position="221"/>
    </location>
    <ligand>
        <name>CMP</name>
        <dbReference type="ChEBI" id="CHEBI:60377"/>
    </ligand>
</feature>
<feature type="sequence variant" id="VAR_024246" description="In dbSNP:rs7771473.">
    <original>E</original>
    <variation>K</variation>
    <location>
        <position position="26"/>
    </location>
</feature>
<feature type="sequence variant" id="VAR_024247" description="In dbSNP:rs1190788.">
    <original>S</original>
    <variation>N</variation>
    <location>
        <position position="215"/>
    </location>
</feature>
<feature type="helix" evidence="8">
    <location>
        <begin position="78"/>
        <end position="82"/>
    </location>
</feature>
<feature type="strand" evidence="8">
    <location>
        <begin position="87"/>
        <end position="92"/>
    </location>
</feature>
<feature type="helix" evidence="8">
    <location>
        <begin position="96"/>
        <end position="112"/>
    </location>
</feature>
<feature type="helix" evidence="8">
    <location>
        <begin position="114"/>
        <end position="119"/>
    </location>
</feature>
<feature type="strand" evidence="8">
    <location>
        <begin position="127"/>
        <end position="134"/>
    </location>
</feature>
<feature type="helix" evidence="8">
    <location>
        <begin position="138"/>
        <end position="159"/>
    </location>
</feature>
<feature type="strand" evidence="8">
    <location>
        <begin position="165"/>
        <end position="174"/>
    </location>
</feature>
<feature type="turn" evidence="8">
    <location>
        <begin position="175"/>
        <end position="177"/>
    </location>
</feature>
<feature type="strand" evidence="8">
    <location>
        <begin position="178"/>
        <end position="183"/>
    </location>
</feature>
<feature type="helix" evidence="8">
    <location>
        <begin position="187"/>
        <end position="205"/>
    </location>
</feature>
<feature type="strand" evidence="8">
    <location>
        <begin position="219"/>
        <end position="224"/>
    </location>
</feature>
<feature type="helix" evidence="8">
    <location>
        <begin position="225"/>
        <end position="227"/>
    </location>
</feature>
<feature type="helix" evidence="8">
    <location>
        <begin position="229"/>
        <end position="232"/>
    </location>
</feature>
<feature type="turn" evidence="8">
    <location>
        <begin position="233"/>
        <end position="235"/>
    </location>
</feature>
<feature type="helix" evidence="8">
    <location>
        <begin position="241"/>
        <end position="247"/>
    </location>
</feature>
<feature type="strand" evidence="8">
    <location>
        <begin position="251"/>
        <end position="256"/>
    </location>
</feature>
<feature type="strand" evidence="8">
    <location>
        <begin position="259"/>
        <end position="267"/>
    </location>
</feature>
<feature type="strand" evidence="8">
    <location>
        <begin position="277"/>
        <end position="284"/>
    </location>
</feature>
<feature type="helix" evidence="7">
    <location>
        <begin position="294"/>
        <end position="319"/>
    </location>
</feature>
<protein>
    <recommendedName>
        <fullName>A-kinase anchor protein 7 isoform gamma</fullName>
        <shortName>AKAP-7 isoform gamma</shortName>
    </recommendedName>
    <alternativeName>
        <fullName>A-kinase anchor protein 18 kDa</fullName>
        <shortName>AKAP 18</shortName>
    </alternativeName>
    <alternativeName>
        <fullName>Protein kinase A-anchoring protein 7 isoform gamma</fullName>
        <shortName>PRKA7 isoform gamma</shortName>
    </alternativeName>
</protein>